<organism>
    <name type="scientific">Burkholderia pseudomallei (strain K96243)</name>
    <dbReference type="NCBI Taxonomy" id="272560"/>
    <lineage>
        <taxon>Bacteria</taxon>
        <taxon>Pseudomonadati</taxon>
        <taxon>Pseudomonadota</taxon>
        <taxon>Betaproteobacteria</taxon>
        <taxon>Burkholderiales</taxon>
        <taxon>Burkholderiaceae</taxon>
        <taxon>Burkholderia</taxon>
        <taxon>pseudomallei group</taxon>
    </lineage>
</organism>
<protein>
    <recommendedName>
        <fullName evidence="1">Large ribosomal subunit protein uL3</fullName>
    </recommendedName>
    <alternativeName>
        <fullName evidence="3">50S ribosomal protein L3</fullName>
    </alternativeName>
</protein>
<reference key="1">
    <citation type="journal article" date="2004" name="Proc. Natl. Acad. Sci. U.S.A.">
        <title>Genomic plasticity of the causative agent of melioidosis, Burkholderia pseudomallei.</title>
        <authorList>
            <person name="Holden M.T.G."/>
            <person name="Titball R.W."/>
            <person name="Peacock S.J."/>
            <person name="Cerdeno-Tarraga A.-M."/>
            <person name="Atkins T."/>
            <person name="Crossman L.C."/>
            <person name="Pitt T."/>
            <person name="Churcher C."/>
            <person name="Mungall K.L."/>
            <person name="Bentley S.D."/>
            <person name="Sebaihia M."/>
            <person name="Thomson N.R."/>
            <person name="Bason N."/>
            <person name="Beacham I.R."/>
            <person name="Brooks K."/>
            <person name="Brown K.A."/>
            <person name="Brown N.F."/>
            <person name="Challis G.L."/>
            <person name="Cherevach I."/>
            <person name="Chillingworth T."/>
            <person name="Cronin A."/>
            <person name="Crossett B."/>
            <person name="Davis P."/>
            <person name="DeShazer D."/>
            <person name="Feltwell T."/>
            <person name="Fraser A."/>
            <person name="Hance Z."/>
            <person name="Hauser H."/>
            <person name="Holroyd S."/>
            <person name="Jagels K."/>
            <person name="Keith K.E."/>
            <person name="Maddison M."/>
            <person name="Moule S."/>
            <person name="Price C."/>
            <person name="Quail M.A."/>
            <person name="Rabbinowitsch E."/>
            <person name="Rutherford K."/>
            <person name="Sanders M."/>
            <person name="Simmonds M."/>
            <person name="Songsivilai S."/>
            <person name="Stevens K."/>
            <person name="Tumapa S."/>
            <person name="Vesaratchavest M."/>
            <person name="Whitehead S."/>
            <person name="Yeats C."/>
            <person name="Barrell B.G."/>
            <person name="Oyston P.C.F."/>
            <person name="Parkhill J."/>
        </authorList>
    </citation>
    <scope>NUCLEOTIDE SEQUENCE [LARGE SCALE GENOMIC DNA]</scope>
    <source>
        <strain>K96243</strain>
    </source>
</reference>
<sequence length="219" mass="22967">MSLGLVGRKVGMTRIFTAEGDSIPVTVLDVSDNRVTQIKTVETDGYTAVQVAFGSRRASRVTKPLAGHLAKAGVEAGEILKEFRIEADKAAELSNGAVIGPDLFEVGQKVDVQGVSIGKGYAGTIKRYNFGSGRASHGNSRSHNVPGSIGMAQDPGRVFPGKRMTGHMGDETVTVQNLEIARIDADRKLLLVKGAVPGAKGGKVFVTPAVKTRAVKGAK</sequence>
<evidence type="ECO:0000255" key="1">
    <source>
        <dbReference type="HAMAP-Rule" id="MF_01325"/>
    </source>
</evidence>
<evidence type="ECO:0000256" key="2">
    <source>
        <dbReference type="SAM" id="MobiDB-lite"/>
    </source>
</evidence>
<evidence type="ECO:0000305" key="3"/>
<accession>Q63Q11</accession>
<dbReference type="EMBL" id="BX571965">
    <property type="protein sequence ID" value="CAH37224.1"/>
    <property type="molecule type" value="Genomic_DNA"/>
</dbReference>
<dbReference type="RefSeq" id="WP_004521904.1">
    <property type="nucleotide sequence ID" value="NZ_CP009538.1"/>
</dbReference>
<dbReference type="RefSeq" id="YP_109807.1">
    <property type="nucleotide sequence ID" value="NC_006350.1"/>
</dbReference>
<dbReference type="SMR" id="Q63Q11"/>
<dbReference type="STRING" id="272560.BPSL3213"/>
<dbReference type="GeneID" id="93061832"/>
<dbReference type="KEGG" id="bps:BPSL3213"/>
<dbReference type="PATRIC" id="fig|272560.51.peg.2025"/>
<dbReference type="eggNOG" id="COG0087">
    <property type="taxonomic scope" value="Bacteria"/>
</dbReference>
<dbReference type="Proteomes" id="UP000000605">
    <property type="component" value="Chromosome 1"/>
</dbReference>
<dbReference type="GO" id="GO:0022625">
    <property type="term" value="C:cytosolic large ribosomal subunit"/>
    <property type="evidence" value="ECO:0007669"/>
    <property type="project" value="TreeGrafter"/>
</dbReference>
<dbReference type="GO" id="GO:0019843">
    <property type="term" value="F:rRNA binding"/>
    <property type="evidence" value="ECO:0007669"/>
    <property type="project" value="UniProtKB-UniRule"/>
</dbReference>
<dbReference type="GO" id="GO:0003735">
    <property type="term" value="F:structural constituent of ribosome"/>
    <property type="evidence" value="ECO:0007669"/>
    <property type="project" value="InterPro"/>
</dbReference>
<dbReference type="GO" id="GO:0006412">
    <property type="term" value="P:translation"/>
    <property type="evidence" value="ECO:0007669"/>
    <property type="project" value="UniProtKB-UniRule"/>
</dbReference>
<dbReference type="FunFam" id="2.40.30.10:FF:000004">
    <property type="entry name" value="50S ribosomal protein L3"/>
    <property type="match status" value="1"/>
</dbReference>
<dbReference type="FunFam" id="3.30.160.810:FF:000001">
    <property type="entry name" value="50S ribosomal protein L3"/>
    <property type="match status" value="1"/>
</dbReference>
<dbReference type="Gene3D" id="3.30.160.810">
    <property type="match status" value="1"/>
</dbReference>
<dbReference type="Gene3D" id="2.40.30.10">
    <property type="entry name" value="Translation factors"/>
    <property type="match status" value="1"/>
</dbReference>
<dbReference type="HAMAP" id="MF_01325_B">
    <property type="entry name" value="Ribosomal_uL3_B"/>
    <property type="match status" value="1"/>
</dbReference>
<dbReference type="InterPro" id="IPR000597">
    <property type="entry name" value="Ribosomal_uL3"/>
</dbReference>
<dbReference type="InterPro" id="IPR019927">
    <property type="entry name" value="Ribosomal_uL3_bac/org-type"/>
</dbReference>
<dbReference type="InterPro" id="IPR019926">
    <property type="entry name" value="Ribosomal_uL3_CS"/>
</dbReference>
<dbReference type="InterPro" id="IPR009000">
    <property type="entry name" value="Transl_B-barrel_sf"/>
</dbReference>
<dbReference type="NCBIfam" id="TIGR03625">
    <property type="entry name" value="L3_bact"/>
    <property type="match status" value="1"/>
</dbReference>
<dbReference type="PANTHER" id="PTHR11229">
    <property type="entry name" value="50S RIBOSOMAL PROTEIN L3"/>
    <property type="match status" value="1"/>
</dbReference>
<dbReference type="PANTHER" id="PTHR11229:SF16">
    <property type="entry name" value="LARGE RIBOSOMAL SUBUNIT PROTEIN UL3C"/>
    <property type="match status" value="1"/>
</dbReference>
<dbReference type="Pfam" id="PF00297">
    <property type="entry name" value="Ribosomal_L3"/>
    <property type="match status" value="1"/>
</dbReference>
<dbReference type="SUPFAM" id="SSF50447">
    <property type="entry name" value="Translation proteins"/>
    <property type="match status" value="1"/>
</dbReference>
<dbReference type="PROSITE" id="PS00474">
    <property type="entry name" value="RIBOSOMAL_L3"/>
    <property type="match status" value="1"/>
</dbReference>
<proteinExistence type="inferred from homology"/>
<gene>
    <name evidence="1" type="primary">rplC</name>
    <name type="ordered locus">BPSL3213</name>
</gene>
<keyword id="KW-0488">Methylation</keyword>
<keyword id="KW-1185">Reference proteome</keyword>
<keyword id="KW-0687">Ribonucleoprotein</keyword>
<keyword id="KW-0689">Ribosomal protein</keyword>
<keyword id="KW-0694">RNA-binding</keyword>
<keyword id="KW-0699">rRNA-binding</keyword>
<comment type="function">
    <text evidence="1">One of the primary rRNA binding proteins, it binds directly near the 3'-end of the 23S rRNA, where it nucleates assembly of the 50S subunit.</text>
</comment>
<comment type="subunit">
    <text evidence="1">Part of the 50S ribosomal subunit. Forms a cluster with proteins L14 and L19.</text>
</comment>
<comment type="PTM">
    <text evidence="1">Methylated by PrmB.</text>
</comment>
<comment type="similarity">
    <text evidence="1">Belongs to the universal ribosomal protein uL3 family.</text>
</comment>
<name>RL3_BURPS</name>
<feature type="chain" id="PRO_0000241326" description="Large ribosomal subunit protein uL3">
    <location>
        <begin position="1"/>
        <end position="219"/>
    </location>
</feature>
<feature type="region of interest" description="Disordered" evidence="2">
    <location>
        <begin position="133"/>
        <end position="153"/>
    </location>
</feature>
<feature type="modified residue" description="N5-methylglutamine" evidence="1">
    <location>
        <position position="153"/>
    </location>
</feature>